<keyword id="KW-0378">Hydrolase</keyword>
<keyword id="KW-0479">Metal-binding</keyword>
<keyword id="KW-0482">Metalloprotease</keyword>
<keyword id="KW-0645">Protease</keyword>
<keyword id="KW-0862">Zinc</keyword>
<feature type="chain" id="PRO_0000190722" description="UPF0758 protein">
    <location>
        <begin position="1"/>
        <end position="214"/>
    </location>
</feature>
<feature type="domain" description="MPN" evidence="1">
    <location>
        <begin position="92"/>
        <end position="214"/>
    </location>
</feature>
<feature type="short sequence motif" description="JAMM motif" evidence="1">
    <location>
        <begin position="163"/>
        <end position="176"/>
    </location>
</feature>
<feature type="binding site" evidence="1">
    <location>
        <position position="163"/>
    </location>
    <ligand>
        <name>Zn(2+)</name>
        <dbReference type="ChEBI" id="CHEBI:29105"/>
        <note>catalytic</note>
    </ligand>
</feature>
<feature type="binding site" evidence="1">
    <location>
        <position position="165"/>
    </location>
    <ligand>
        <name>Zn(2+)</name>
        <dbReference type="ChEBI" id="CHEBI:29105"/>
        <note>catalytic</note>
    </ligand>
</feature>
<feature type="binding site" evidence="1">
    <location>
        <position position="176"/>
    </location>
    <ligand>
        <name>Zn(2+)</name>
        <dbReference type="ChEBI" id="CHEBI:29105"/>
        <note>catalytic</note>
    </ligand>
</feature>
<protein>
    <recommendedName>
        <fullName>UPF0758 protein</fullName>
    </recommendedName>
</protein>
<reference key="1">
    <citation type="journal article" date="1999" name="Microbiol. Res.">
        <title>Molecular analysis and identification of the radC gene from the phototrophic bacterium Rhodobacter capsulatus B10.</title>
        <authorList>
            <person name="Katsiou E."/>
            <person name="Nickel C.M."/>
            <person name="Garcia A.F."/>
            <person name="Tadros M.H."/>
        </authorList>
    </citation>
    <scope>NUCLEOTIDE SEQUENCE [GENOMIC DNA]</scope>
    <scope>INDUCTION</scope>
    <source>
        <strain>ATCC 33303 / B10</strain>
    </source>
</reference>
<comment type="induction">
    <text evidence="2">Induced about five-fold after UV-irradiation.</text>
</comment>
<comment type="similarity">
    <text evidence="3">Belongs to the UPF0758 family.</text>
</comment>
<organism>
    <name type="scientific">Rhodobacter capsulatus</name>
    <name type="common">Rhodopseudomonas capsulata</name>
    <dbReference type="NCBI Taxonomy" id="1061"/>
    <lineage>
        <taxon>Bacteria</taxon>
        <taxon>Pseudomonadati</taxon>
        <taxon>Pseudomonadota</taxon>
        <taxon>Alphaproteobacteria</taxon>
        <taxon>Rhodobacterales</taxon>
        <taxon>Rhodobacter group</taxon>
        <taxon>Rhodobacter</taxon>
    </lineage>
</organism>
<name>Y2304_RHOCA</name>
<sequence length="214" mass="23793">MLRERFLTGGAEAMPDYELLELILFRALPRQDVKPLARRLLDVFGSFGHVLAAPPARLTEVTGVGEAVVQELKIVEAAAQRLARSRVLQRPVLSSWQALLDYCHTAMAHRPTEQFRVLFLDRKNLLIADEEQARGTVDHVPVYPREVVKRALELDASALILVHNHPSGDPTPSQADIAMTDQIRHAAEALGLVLHDHLVIGKGRELSFRAEGLL</sequence>
<evidence type="ECO:0000255" key="1">
    <source>
        <dbReference type="PROSITE-ProRule" id="PRU01182"/>
    </source>
</evidence>
<evidence type="ECO:0000269" key="2">
    <source>
    </source>
</evidence>
<evidence type="ECO:0000305" key="3"/>
<proteinExistence type="evidence at transcript level"/>
<dbReference type="EMBL" id="U74017">
    <property type="protein sequence ID" value="AAB18255.1"/>
    <property type="molecule type" value="Genomic_DNA"/>
</dbReference>
<dbReference type="SMR" id="P72255"/>
<dbReference type="GO" id="GO:0046872">
    <property type="term" value="F:metal ion binding"/>
    <property type="evidence" value="ECO:0007669"/>
    <property type="project" value="UniProtKB-KW"/>
</dbReference>
<dbReference type="GO" id="GO:0008237">
    <property type="term" value="F:metallopeptidase activity"/>
    <property type="evidence" value="ECO:0007669"/>
    <property type="project" value="UniProtKB-KW"/>
</dbReference>
<dbReference type="GO" id="GO:0006508">
    <property type="term" value="P:proteolysis"/>
    <property type="evidence" value="ECO:0007669"/>
    <property type="project" value="UniProtKB-KW"/>
</dbReference>
<dbReference type="CDD" id="cd08071">
    <property type="entry name" value="MPN_DUF2466"/>
    <property type="match status" value="1"/>
</dbReference>
<dbReference type="Gene3D" id="1.10.150.20">
    <property type="entry name" value="5' to 3' exonuclease, C-terminal subdomain"/>
    <property type="match status" value="1"/>
</dbReference>
<dbReference type="Gene3D" id="3.40.140.10">
    <property type="entry name" value="Cytidine Deaminase, domain 2"/>
    <property type="match status" value="1"/>
</dbReference>
<dbReference type="InterPro" id="IPR037518">
    <property type="entry name" value="MPN"/>
</dbReference>
<dbReference type="InterPro" id="IPR025657">
    <property type="entry name" value="RadC_JAB"/>
</dbReference>
<dbReference type="InterPro" id="IPR010994">
    <property type="entry name" value="RuvA_2-like"/>
</dbReference>
<dbReference type="InterPro" id="IPR001405">
    <property type="entry name" value="UPF0758"/>
</dbReference>
<dbReference type="InterPro" id="IPR020891">
    <property type="entry name" value="UPF0758_CS"/>
</dbReference>
<dbReference type="InterPro" id="IPR046778">
    <property type="entry name" value="UPF0758_N"/>
</dbReference>
<dbReference type="NCBIfam" id="NF000642">
    <property type="entry name" value="PRK00024.1"/>
    <property type="match status" value="1"/>
</dbReference>
<dbReference type="NCBIfam" id="TIGR00608">
    <property type="entry name" value="radc"/>
    <property type="match status" value="1"/>
</dbReference>
<dbReference type="PANTHER" id="PTHR30471">
    <property type="entry name" value="DNA REPAIR PROTEIN RADC"/>
    <property type="match status" value="1"/>
</dbReference>
<dbReference type="PANTHER" id="PTHR30471:SF3">
    <property type="entry name" value="UPF0758 PROTEIN YEES-RELATED"/>
    <property type="match status" value="1"/>
</dbReference>
<dbReference type="Pfam" id="PF04002">
    <property type="entry name" value="RadC"/>
    <property type="match status" value="1"/>
</dbReference>
<dbReference type="Pfam" id="PF20582">
    <property type="entry name" value="UPF0758_N"/>
    <property type="match status" value="1"/>
</dbReference>
<dbReference type="SUPFAM" id="SSF102712">
    <property type="entry name" value="JAB1/MPN domain"/>
    <property type="match status" value="1"/>
</dbReference>
<dbReference type="SUPFAM" id="SSF47781">
    <property type="entry name" value="RuvA domain 2-like"/>
    <property type="match status" value="1"/>
</dbReference>
<dbReference type="PROSITE" id="PS50249">
    <property type="entry name" value="MPN"/>
    <property type="match status" value="1"/>
</dbReference>
<dbReference type="PROSITE" id="PS01302">
    <property type="entry name" value="UPF0758"/>
    <property type="match status" value="1"/>
</dbReference>
<accession>P72255</accession>